<proteinExistence type="inferred from homology"/>
<accession>G3N1S4</accession>
<reference key="1">
    <citation type="journal article" date="2009" name="Genome Biol.">
        <title>A whole-genome assembly of the domestic cow, Bos taurus.</title>
        <authorList>
            <person name="Zimin A.V."/>
            <person name="Delcher A.L."/>
            <person name="Florea L."/>
            <person name="Kelley D.R."/>
            <person name="Schatz M.C."/>
            <person name="Puiu D."/>
            <person name="Hanrahan F."/>
            <person name="Pertea G."/>
            <person name="Van Tassell C.P."/>
            <person name="Sonstegard T.S."/>
            <person name="Marcais G."/>
            <person name="Roberts M."/>
            <person name="Subramanian P."/>
            <person name="Yorke J.A."/>
            <person name="Salzberg S.L."/>
        </authorList>
    </citation>
    <scope>NUCLEOTIDE SEQUENCE [LARGE SCALE GENOMIC DNA]</scope>
    <source>
        <strain>Hereford</strain>
    </source>
</reference>
<keyword id="KW-0010">Activator</keyword>
<keyword id="KW-0131">Cell cycle</keyword>
<keyword id="KW-0970">Cilium biogenesis/degradation</keyword>
<keyword id="KW-0175">Coiled coil</keyword>
<keyword id="KW-0539">Nucleus</keyword>
<keyword id="KW-1185">Reference proteome</keyword>
<keyword id="KW-0804">Transcription</keyword>
<keyword id="KW-0805">Transcription regulation</keyword>
<organism>
    <name type="scientific">Bos taurus</name>
    <name type="common">Bovine</name>
    <dbReference type="NCBI Taxonomy" id="9913"/>
    <lineage>
        <taxon>Eukaryota</taxon>
        <taxon>Metazoa</taxon>
        <taxon>Chordata</taxon>
        <taxon>Craniata</taxon>
        <taxon>Vertebrata</taxon>
        <taxon>Euteleostomi</taxon>
        <taxon>Mammalia</taxon>
        <taxon>Eutheria</taxon>
        <taxon>Laurasiatheria</taxon>
        <taxon>Artiodactyla</taxon>
        <taxon>Ruminantia</taxon>
        <taxon>Pecora</taxon>
        <taxon>Bovidae</taxon>
        <taxon>Bovinae</taxon>
        <taxon>Bos</taxon>
    </lineage>
</organism>
<name>MCIN_BOVIN</name>
<dbReference type="EMBL" id="DAAA02050347">
    <property type="status" value="NOT_ANNOTATED_CDS"/>
    <property type="molecule type" value="Genomic_DNA"/>
</dbReference>
<dbReference type="RefSeq" id="XP_002696376.1">
    <property type="nucleotide sequence ID" value="XM_002696330.6"/>
</dbReference>
<dbReference type="RefSeq" id="XP_003585159.1">
    <property type="nucleotide sequence ID" value="XM_003585111.4"/>
</dbReference>
<dbReference type="SMR" id="G3N1S4"/>
<dbReference type="FunCoup" id="G3N1S4">
    <property type="interactions" value="90"/>
</dbReference>
<dbReference type="STRING" id="9913.ENSBTAP00000055827"/>
<dbReference type="PaxDb" id="9913-ENSBTAP00000055827"/>
<dbReference type="Ensembl" id="ENSBTAT00000064796.3">
    <property type="protein sequence ID" value="ENSBTAP00000055827.1"/>
    <property type="gene ID" value="ENSBTAG00000047087.3"/>
</dbReference>
<dbReference type="GeneID" id="100301340"/>
<dbReference type="KEGG" id="bta:100301340"/>
<dbReference type="CTD" id="345643"/>
<dbReference type="VEuPathDB" id="HostDB:ENSBTAG00000047087"/>
<dbReference type="VGNC" id="VGNC:31306">
    <property type="gene designation" value="MCIDAS"/>
</dbReference>
<dbReference type="eggNOG" id="ENOG502R4B5">
    <property type="taxonomic scope" value="Eukaryota"/>
</dbReference>
<dbReference type="GeneTree" id="ENSGT00940000153270"/>
<dbReference type="HOGENOM" id="CLU_063884_0_0_1"/>
<dbReference type="InParanoid" id="G3N1S4"/>
<dbReference type="OMA" id="PCDISPF"/>
<dbReference type="OrthoDB" id="9445365at2759"/>
<dbReference type="TreeFam" id="TF101171"/>
<dbReference type="Proteomes" id="UP000009136">
    <property type="component" value="Chromosome 20"/>
</dbReference>
<dbReference type="Bgee" id="ENSBTAG00000047087">
    <property type="expression patterns" value="Expressed in olfactory segment of nasal mucosa and 13 other cell types or tissues"/>
</dbReference>
<dbReference type="GO" id="GO:0016604">
    <property type="term" value="C:nuclear body"/>
    <property type="evidence" value="ECO:0007669"/>
    <property type="project" value="Ensembl"/>
</dbReference>
<dbReference type="GO" id="GO:0005634">
    <property type="term" value="C:nucleus"/>
    <property type="evidence" value="ECO:0000250"/>
    <property type="project" value="UniProtKB"/>
</dbReference>
<dbReference type="GO" id="GO:0042802">
    <property type="term" value="F:identical protein binding"/>
    <property type="evidence" value="ECO:0007669"/>
    <property type="project" value="Ensembl"/>
</dbReference>
<dbReference type="GO" id="GO:0098534">
    <property type="term" value="P:centriole assembly"/>
    <property type="evidence" value="ECO:0000250"/>
    <property type="project" value="UniProtKB"/>
</dbReference>
<dbReference type="GO" id="GO:0060271">
    <property type="term" value="P:cilium assembly"/>
    <property type="evidence" value="ECO:0000250"/>
    <property type="project" value="UniProtKB"/>
</dbReference>
<dbReference type="GO" id="GO:0044458">
    <property type="term" value="P:motile cilium assembly"/>
    <property type="evidence" value="ECO:0000250"/>
    <property type="project" value="UniProtKB"/>
</dbReference>
<dbReference type="GO" id="GO:1903251">
    <property type="term" value="P:multi-ciliated epithelial cell differentiation"/>
    <property type="evidence" value="ECO:0000250"/>
    <property type="project" value="UniProtKB"/>
</dbReference>
<dbReference type="GO" id="GO:0045786">
    <property type="term" value="P:negative regulation of cell cycle"/>
    <property type="evidence" value="ECO:0000318"/>
    <property type="project" value="GO_Central"/>
</dbReference>
<dbReference type="GO" id="GO:0045944">
    <property type="term" value="P:positive regulation of transcription by RNA polymerase II"/>
    <property type="evidence" value="ECO:0000250"/>
    <property type="project" value="UniProtKB"/>
</dbReference>
<dbReference type="GO" id="GO:1902017">
    <property type="term" value="P:regulation of cilium assembly"/>
    <property type="evidence" value="ECO:0000250"/>
    <property type="project" value="UniProtKB"/>
</dbReference>
<dbReference type="GO" id="GO:0030174">
    <property type="term" value="P:regulation of DNA-templated DNA replication initiation"/>
    <property type="evidence" value="ECO:0000318"/>
    <property type="project" value="GO_Central"/>
</dbReference>
<dbReference type="GO" id="GO:0007346">
    <property type="term" value="P:regulation of mitotic cell cycle"/>
    <property type="evidence" value="ECO:0007669"/>
    <property type="project" value="Ensembl"/>
</dbReference>
<dbReference type="GO" id="GO:0072520">
    <property type="term" value="P:seminiferous tubule development"/>
    <property type="evidence" value="ECO:0007669"/>
    <property type="project" value="Ensembl"/>
</dbReference>
<dbReference type="GO" id="GO:0007338">
    <property type="term" value="P:single fertilization"/>
    <property type="evidence" value="ECO:0007669"/>
    <property type="project" value="Ensembl"/>
</dbReference>
<dbReference type="GO" id="GO:0007283">
    <property type="term" value="P:spermatogenesis"/>
    <property type="evidence" value="ECO:0007669"/>
    <property type="project" value="Ensembl"/>
</dbReference>
<dbReference type="CDD" id="cd22590">
    <property type="entry name" value="McIdas_CC"/>
    <property type="match status" value="1"/>
</dbReference>
<dbReference type="FunFam" id="1.20.5.1180:FF:000001">
    <property type="entry name" value="Truncated geminin"/>
    <property type="match status" value="1"/>
</dbReference>
<dbReference type="Gene3D" id="1.20.5.1180">
    <property type="entry name" value="Geminin coiled-coil domain"/>
    <property type="match status" value="1"/>
</dbReference>
<dbReference type="InterPro" id="IPR022786">
    <property type="entry name" value="Geminin/Multicilin"/>
</dbReference>
<dbReference type="PANTHER" id="PTHR13372">
    <property type="entry name" value="GEMININ"/>
    <property type="match status" value="1"/>
</dbReference>
<dbReference type="PANTHER" id="PTHR13372:SF3">
    <property type="entry name" value="MULTICILIN"/>
    <property type="match status" value="1"/>
</dbReference>
<dbReference type="Pfam" id="PF07412">
    <property type="entry name" value="Geminin"/>
    <property type="match status" value="1"/>
</dbReference>
<dbReference type="SUPFAM" id="SSF111469">
    <property type="entry name" value="Geminin coiled-coil domain"/>
    <property type="match status" value="1"/>
</dbReference>
<feature type="chain" id="PRO_0000416279" description="Multicilin">
    <location>
        <begin position="1"/>
        <end position="374"/>
    </location>
</feature>
<feature type="region of interest" description="Disordered" evidence="3">
    <location>
        <begin position="18"/>
        <end position="72"/>
    </location>
</feature>
<feature type="region of interest" description="Disordered" evidence="3">
    <location>
        <begin position="84"/>
        <end position="105"/>
    </location>
</feature>
<feature type="region of interest" description="Disordered" evidence="3">
    <location>
        <begin position="284"/>
        <end position="306"/>
    </location>
</feature>
<feature type="coiled-coil region" evidence="1">
    <location>
        <begin position="168"/>
        <end position="216"/>
    </location>
</feature>
<sequence>MQECGATAAGRRAFDSICPNRMLDPRGRPISKPGKPERKFAPPRKFFPGSSGCNRVSVYEDPPDAETPALPALTTIDLQDLADCSSFLGSDPPPGGDSAASQSHSLQTAADFDLQDFRDTVDNLIADSSSLMSPSLAGGDLPFSPSDVLPFGPCLSPPLSPPEVPPPEQYWKEVADQNQRALGDALIENNQLHATLTQKQEEIASLKERNLQLKELASRTRHLASVLDKLMITHSRDPGAAAEPFLLKATAKRSLEELFSAAGQDCAEVDAVLREISERCDEALQSRDPKRLRLQPEPQSLDRRPGNLHGAFPGLRTDCSLSTLNLSHSELEEGGSFSTPIRSHSTIRTLAFPQGNAFTIRTANGGYKFRWIPS</sequence>
<comment type="function">
    <text evidence="1 2">Transcription regulator specifically required for multiciliate cell differentiation. Acts in a multiprotein complex containing E2F4 and E2F5 that binds and activates genes required for centriole biogenesis. Required for the deuterosome-mediated acentriolar pathway. Plays a role in mitotic cell cycle progression by promoting cell cycle exit. Modulates GMNN activity by reducing its affinity for CDT1.</text>
</comment>
<comment type="subunit">
    <text evidence="1">Heterodimer (via coiled-coil domain) with GMNN (via coiled-coil domain); targets GMNN to the nucleus. Can form homodimers (in vitro, via coiled-coil domain), but these are much less stable than the heterodimer formed with GMNN.</text>
</comment>
<comment type="subcellular location">
    <subcellularLocation>
        <location evidence="1">Nucleus</location>
    </subcellularLocation>
    <text evidence="1">Excluded from the nucleolus.</text>
</comment>
<comment type="similarity">
    <text evidence="4">Belongs to the geminin family.</text>
</comment>
<evidence type="ECO:0000250" key="1">
    <source>
        <dbReference type="UniProtKB" id="D6RGH6"/>
    </source>
</evidence>
<evidence type="ECO:0000250" key="2">
    <source>
        <dbReference type="UniProtKB" id="Q08B36"/>
    </source>
</evidence>
<evidence type="ECO:0000256" key="3">
    <source>
        <dbReference type="SAM" id="MobiDB-lite"/>
    </source>
</evidence>
<evidence type="ECO:0000305" key="4"/>
<gene>
    <name type="primary">MCIDAS</name>
    <name type="synonym">IDAS</name>
    <name type="synonym">MCI</name>
    <name type="synonym">MCIN</name>
</gene>
<protein>
    <recommendedName>
        <fullName>Multicilin</fullName>
    </recommendedName>
    <alternativeName>
        <fullName>Multiciliate differentiation and DNA synthesis-associated cell cycle protein</fullName>
        <shortName>McIdas protein</shortName>
    </alternativeName>
    <alternativeName>
        <fullName>Protein Idas</fullName>
    </alternativeName>
</protein>